<proteinExistence type="inferred from homology"/>
<evidence type="ECO:0000250" key="1"/>
<evidence type="ECO:0000255" key="2">
    <source>
        <dbReference type="PROSITE-ProRule" id="PRU00703"/>
    </source>
</evidence>
<evidence type="ECO:0000256" key="3">
    <source>
        <dbReference type="SAM" id="MobiDB-lite"/>
    </source>
</evidence>
<evidence type="ECO:0000305" key="4"/>
<organism>
    <name type="scientific">Dictyostelium discoideum</name>
    <name type="common">Social amoeba</name>
    <dbReference type="NCBI Taxonomy" id="44689"/>
    <lineage>
        <taxon>Eukaryota</taxon>
        <taxon>Amoebozoa</taxon>
        <taxon>Evosea</taxon>
        <taxon>Eumycetozoa</taxon>
        <taxon>Dictyostelia</taxon>
        <taxon>Dictyosteliales</taxon>
        <taxon>Dictyosteliaceae</taxon>
        <taxon>Dictyostelium</taxon>
    </lineage>
</organism>
<feature type="chain" id="PRO_0000376890" description="5'-AMP-activated protein kinase subunit gamma">
    <location>
        <begin position="1"/>
        <end position="577"/>
    </location>
</feature>
<feature type="domain" description="CBS 1" evidence="2">
    <location>
        <begin position="279"/>
        <end position="341"/>
    </location>
</feature>
<feature type="domain" description="CBS 2" evidence="2">
    <location>
        <begin position="364"/>
        <end position="426"/>
    </location>
</feature>
<feature type="domain" description="CBS 3" evidence="2">
    <location>
        <begin position="438"/>
        <end position="499"/>
    </location>
</feature>
<feature type="domain" description="CBS 4" evidence="2">
    <location>
        <begin position="517"/>
        <end position="574"/>
    </location>
</feature>
<feature type="region of interest" description="Disordered" evidence="3">
    <location>
        <begin position="45"/>
        <end position="226"/>
    </location>
</feature>
<feature type="compositionally biased region" description="Low complexity" evidence="3">
    <location>
        <begin position="58"/>
        <end position="88"/>
    </location>
</feature>
<feature type="compositionally biased region" description="Polar residues" evidence="3">
    <location>
        <begin position="106"/>
        <end position="121"/>
    </location>
</feature>
<feature type="compositionally biased region" description="Polar residues" evidence="3">
    <location>
        <begin position="138"/>
        <end position="155"/>
    </location>
</feature>
<feature type="compositionally biased region" description="Low complexity" evidence="3">
    <location>
        <begin position="165"/>
        <end position="226"/>
    </location>
</feature>
<sequence length="577" mass="64209">MWYPGDEDEEFTSIIENIEKKETQEIKIKTEKLRQASLNQLPIEQSEGVGGGELSEYNNNTTNNNTPTNTTTTTNTNTTTMNNSNNNNERILSTSNGFDIRLPPNSIEQPSPSFISSSQDGVLTVDPLAVDGEKGNKESQSPPNGDNQILNNNNMFFKDITSLPSTDNKSSTNTNNNNNENPLKQTISSSPSKSTTTTTTSTSTTTTPSLSSLSSNNNNNSNSNNNYINHSSISTVSEGLENLNLKSGIKKIDSETEKYIEEGKQVFVNFLKGHTCYDVIPISGKVVVLDTKLAVKSAFYALEENGIKSAPLWNSEQHDFTGMITVSDFIDILLYYYKKPKSNNIFQDMGIHRIETFWREISVERPSSLISTEPETNLYDAASLLLCYKIHRLPVVDKKDTNSILHILTHSRILAFMMKSFPQLPEKLLSIPIGSLGIGTFATVVTVMTHTPLVEVLELLSEKKISAVPIIDSETSKIVDVYSKSDVTLMSKQGILSPSDLNLPVHQVLSTFTKLWQRPEQIYTCTRFDKLGDVIERCIKKRVHRLVCIDSSKKVEGILSLSDILNYLLNDVKSINH</sequence>
<name>PRKAG_DICDI</name>
<reference key="1">
    <citation type="journal article" date="2002" name="Nature">
        <title>Sequence and analysis of chromosome 2 of Dictyostelium discoideum.</title>
        <authorList>
            <person name="Gloeckner G."/>
            <person name="Eichinger L."/>
            <person name="Szafranski K."/>
            <person name="Pachebat J.A."/>
            <person name="Bankier A.T."/>
            <person name="Dear P.H."/>
            <person name="Lehmann R."/>
            <person name="Baumgart C."/>
            <person name="Parra G."/>
            <person name="Abril J.F."/>
            <person name="Guigo R."/>
            <person name="Kumpf K."/>
            <person name="Tunggal B."/>
            <person name="Cox E.C."/>
            <person name="Quail M.A."/>
            <person name="Platzer M."/>
            <person name="Rosenthal A."/>
            <person name="Noegel A.A."/>
        </authorList>
    </citation>
    <scope>NUCLEOTIDE SEQUENCE [LARGE SCALE GENOMIC DNA]</scope>
    <source>
        <strain>AX4</strain>
    </source>
</reference>
<reference key="2">
    <citation type="journal article" date="2005" name="Nature">
        <title>The genome of the social amoeba Dictyostelium discoideum.</title>
        <authorList>
            <person name="Eichinger L."/>
            <person name="Pachebat J.A."/>
            <person name="Gloeckner G."/>
            <person name="Rajandream M.A."/>
            <person name="Sucgang R."/>
            <person name="Berriman M."/>
            <person name="Song J."/>
            <person name="Olsen R."/>
            <person name="Szafranski K."/>
            <person name="Xu Q."/>
            <person name="Tunggal B."/>
            <person name="Kummerfeld S."/>
            <person name="Madera M."/>
            <person name="Konfortov B.A."/>
            <person name="Rivero F."/>
            <person name="Bankier A.T."/>
            <person name="Lehmann R."/>
            <person name="Hamlin N."/>
            <person name="Davies R."/>
            <person name="Gaudet P."/>
            <person name="Fey P."/>
            <person name="Pilcher K."/>
            <person name="Chen G."/>
            <person name="Saunders D."/>
            <person name="Sodergren E.J."/>
            <person name="Davis P."/>
            <person name="Kerhornou A."/>
            <person name="Nie X."/>
            <person name="Hall N."/>
            <person name="Anjard C."/>
            <person name="Hemphill L."/>
            <person name="Bason N."/>
            <person name="Farbrother P."/>
            <person name="Desany B."/>
            <person name="Just E."/>
            <person name="Morio T."/>
            <person name="Rost R."/>
            <person name="Churcher C.M."/>
            <person name="Cooper J."/>
            <person name="Haydock S."/>
            <person name="van Driessche N."/>
            <person name="Cronin A."/>
            <person name="Goodhead I."/>
            <person name="Muzny D.M."/>
            <person name="Mourier T."/>
            <person name="Pain A."/>
            <person name="Lu M."/>
            <person name="Harper D."/>
            <person name="Lindsay R."/>
            <person name="Hauser H."/>
            <person name="James K.D."/>
            <person name="Quiles M."/>
            <person name="Madan Babu M."/>
            <person name="Saito T."/>
            <person name="Buchrieser C."/>
            <person name="Wardroper A."/>
            <person name="Felder M."/>
            <person name="Thangavelu M."/>
            <person name="Johnson D."/>
            <person name="Knights A."/>
            <person name="Loulseged H."/>
            <person name="Mungall K.L."/>
            <person name="Oliver K."/>
            <person name="Price C."/>
            <person name="Quail M.A."/>
            <person name="Urushihara H."/>
            <person name="Hernandez J."/>
            <person name="Rabbinowitsch E."/>
            <person name="Steffen D."/>
            <person name="Sanders M."/>
            <person name="Ma J."/>
            <person name="Kohara Y."/>
            <person name="Sharp S."/>
            <person name="Simmonds M.N."/>
            <person name="Spiegler S."/>
            <person name="Tivey A."/>
            <person name="Sugano S."/>
            <person name="White B."/>
            <person name="Walker D."/>
            <person name="Woodward J.R."/>
            <person name="Winckler T."/>
            <person name="Tanaka Y."/>
            <person name="Shaulsky G."/>
            <person name="Schleicher M."/>
            <person name="Weinstock G.M."/>
            <person name="Rosenthal A."/>
            <person name="Cox E.C."/>
            <person name="Chisholm R.L."/>
            <person name="Gibbs R.A."/>
            <person name="Loomis W.F."/>
            <person name="Platzer M."/>
            <person name="Kay R.R."/>
            <person name="Williams J.G."/>
            <person name="Dear P.H."/>
            <person name="Noegel A.A."/>
            <person name="Barrell B.G."/>
            <person name="Kuspa A."/>
        </authorList>
    </citation>
    <scope>NUCLEOTIDE SEQUENCE [LARGE SCALE GENOMIC DNA]</scope>
    <source>
        <strain>AX4</strain>
    </source>
</reference>
<protein>
    <recommendedName>
        <fullName>5'-AMP-activated protein kinase subunit gamma</fullName>
        <shortName>AMPK subunit gamma</shortName>
    </recommendedName>
</protein>
<keyword id="KW-0129">CBS domain</keyword>
<keyword id="KW-0275">Fatty acid biosynthesis</keyword>
<keyword id="KW-0276">Fatty acid metabolism</keyword>
<keyword id="KW-0444">Lipid biosynthesis</keyword>
<keyword id="KW-0443">Lipid metabolism</keyword>
<keyword id="KW-1185">Reference proteome</keyword>
<keyword id="KW-0677">Repeat</keyword>
<comment type="function">
    <text evidence="1">AMPK may be responsible for the regulation of fatty acid synthesis by phosphorylation of acetyl-CoA carboxylase.</text>
</comment>
<comment type="similarity">
    <text evidence="4">Belongs to the 5'-AMP-activated protein kinase gamma subunit family.</text>
</comment>
<dbReference type="EMBL" id="AAFI02000008">
    <property type="protein sequence ID" value="EAL71195.1"/>
    <property type="molecule type" value="Genomic_DNA"/>
</dbReference>
<dbReference type="RefSeq" id="XP_645104.1">
    <property type="nucleotide sequence ID" value="XM_640012.1"/>
</dbReference>
<dbReference type="SMR" id="Q8T277"/>
<dbReference type="FunCoup" id="Q8T277">
    <property type="interactions" value="97"/>
</dbReference>
<dbReference type="STRING" id="44689.Q8T277"/>
<dbReference type="PaxDb" id="44689-DDB0237813"/>
<dbReference type="EnsemblProtists" id="EAL71195">
    <property type="protein sequence ID" value="EAL71195"/>
    <property type="gene ID" value="DDB_G0272542"/>
</dbReference>
<dbReference type="GeneID" id="8618498"/>
<dbReference type="KEGG" id="ddi:DDB_G0272542"/>
<dbReference type="dictyBase" id="DDB_G0272542">
    <property type="gene designation" value="prkag"/>
</dbReference>
<dbReference type="VEuPathDB" id="AmoebaDB:DDB_G0272542"/>
<dbReference type="eggNOG" id="KOG1764">
    <property type="taxonomic scope" value="Eukaryota"/>
</dbReference>
<dbReference type="HOGENOM" id="CLU_472857_0_0_1"/>
<dbReference type="InParanoid" id="Q8T277"/>
<dbReference type="PhylomeDB" id="Q8T277"/>
<dbReference type="Reactome" id="R-DDI-1632852">
    <property type="pathway name" value="Macroautophagy"/>
</dbReference>
<dbReference type="Reactome" id="R-DDI-163680">
    <property type="pathway name" value="AMPK inhibits chREBP transcriptional activation activity"/>
</dbReference>
<dbReference type="Reactome" id="R-DDI-200425">
    <property type="pathway name" value="Carnitine shuttle"/>
</dbReference>
<dbReference type="Reactome" id="R-DDI-380972">
    <property type="pathway name" value="Energy dependent regulation of mTOR by LKB1-AMPK"/>
</dbReference>
<dbReference type="Reactome" id="R-DDI-5628897">
    <property type="pathway name" value="TP53 Regulates Metabolic Genes"/>
</dbReference>
<dbReference type="PRO" id="PR:Q8T277"/>
<dbReference type="Proteomes" id="UP000002195">
    <property type="component" value="Chromosome 2"/>
</dbReference>
<dbReference type="GO" id="GO:0005737">
    <property type="term" value="C:cytoplasm"/>
    <property type="evidence" value="ECO:0000318"/>
    <property type="project" value="GO_Central"/>
</dbReference>
<dbReference type="GO" id="GO:0031588">
    <property type="term" value="C:nucleotide-activated protein kinase complex"/>
    <property type="evidence" value="ECO:0000318"/>
    <property type="project" value="GO_Central"/>
</dbReference>
<dbReference type="GO" id="GO:0005634">
    <property type="term" value="C:nucleus"/>
    <property type="evidence" value="ECO:0000318"/>
    <property type="project" value="GO_Central"/>
</dbReference>
<dbReference type="GO" id="GO:0016208">
    <property type="term" value="F:AMP binding"/>
    <property type="evidence" value="ECO:0000318"/>
    <property type="project" value="GO_Central"/>
</dbReference>
<dbReference type="GO" id="GO:0019901">
    <property type="term" value="F:protein kinase binding"/>
    <property type="evidence" value="ECO:0000318"/>
    <property type="project" value="GO_Central"/>
</dbReference>
<dbReference type="GO" id="GO:0019887">
    <property type="term" value="F:protein kinase regulator activity"/>
    <property type="evidence" value="ECO:0000318"/>
    <property type="project" value="GO_Central"/>
</dbReference>
<dbReference type="GO" id="GO:0042149">
    <property type="term" value="P:cellular response to glucose starvation"/>
    <property type="evidence" value="ECO:0000318"/>
    <property type="project" value="GO_Central"/>
</dbReference>
<dbReference type="GO" id="GO:0006633">
    <property type="term" value="P:fatty acid biosynthetic process"/>
    <property type="evidence" value="ECO:0007669"/>
    <property type="project" value="UniProtKB-KW"/>
</dbReference>
<dbReference type="GO" id="GO:0045722">
    <property type="term" value="P:positive regulation of gluconeogenesis"/>
    <property type="evidence" value="ECO:0000318"/>
    <property type="project" value="GO_Central"/>
</dbReference>
<dbReference type="GO" id="GO:0043609">
    <property type="term" value="P:regulation of carbon utilization"/>
    <property type="evidence" value="ECO:0000318"/>
    <property type="project" value="GO_Central"/>
</dbReference>
<dbReference type="GO" id="GO:0006110">
    <property type="term" value="P:regulation of glycolytic process"/>
    <property type="evidence" value="ECO:0000318"/>
    <property type="project" value="GO_Central"/>
</dbReference>
<dbReference type="CDD" id="cd04618">
    <property type="entry name" value="CBS_euAMPK_gamma-like_repeat1"/>
    <property type="match status" value="1"/>
</dbReference>
<dbReference type="CDD" id="cd04641">
    <property type="entry name" value="CBS_euAMPK_gamma-like_repeat2"/>
    <property type="match status" value="1"/>
</dbReference>
<dbReference type="Gene3D" id="3.10.580.10">
    <property type="entry name" value="CBS-domain"/>
    <property type="match status" value="2"/>
</dbReference>
<dbReference type="InterPro" id="IPR050511">
    <property type="entry name" value="AMPK_gamma/SDS23_families"/>
</dbReference>
<dbReference type="InterPro" id="IPR000644">
    <property type="entry name" value="CBS_dom"/>
</dbReference>
<dbReference type="InterPro" id="IPR046342">
    <property type="entry name" value="CBS_dom_sf"/>
</dbReference>
<dbReference type="PANTHER" id="PTHR13780">
    <property type="entry name" value="AMP-ACTIVATED PROTEIN KINASE, GAMMA REGULATORY SUBUNIT"/>
    <property type="match status" value="1"/>
</dbReference>
<dbReference type="PANTHER" id="PTHR13780:SF35">
    <property type="entry name" value="LD22662P"/>
    <property type="match status" value="1"/>
</dbReference>
<dbReference type="Pfam" id="PF00571">
    <property type="entry name" value="CBS"/>
    <property type="match status" value="3"/>
</dbReference>
<dbReference type="SMART" id="SM00116">
    <property type="entry name" value="CBS"/>
    <property type="match status" value="4"/>
</dbReference>
<dbReference type="SUPFAM" id="SSF54631">
    <property type="entry name" value="CBS-domain pair"/>
    <property type="match status" value="2"/>
</dbReference>
<dbReference type="PROSITE" id="PS51371">
    <property type="entry name" value="CBS"/>
    <property type="match status" value="4"/>
</dbReference>
<accession>Q8T277</accession>
<accession>Q559K2</accession>
<gene>
    <name type="primary">prkag</name>
    <name type="ORF">DDB_G0272542</name>
</gene>